<protein>
    <recommendedName>
        <fullName evidence="1">4-hydroxy-3-methylbut-2-en-1-yl diphosphate synthase (flavodoxin)</fullName>
        <ecNumber evidence="1">1.17.7.3</ecNumber>
    </recommendedName>
    <alternativeName>
        <fullName evidence="1">1-hydroxy-2-methyl-2-(E)-butenyl 4-diphosphate synthase</fullName>
    </alternativeName>
</protein>
<organism>
    <name type="scientific">Exiguobacterium sibiricum (strain DSM 17290 / CCUG 55495 / CIP 109462 / JCM 13490 / 255-15)</name>
    <dbReference type="NCBI Taxonomy" id="262543"/>
    <lineage>
        <taxon>Bacteria</taxon>
        <taxon>Bacillati</taxon>
        <taxon>Bacillota</taxon>
        <taxon>Bacilli</taxon>
        <taxon>Bacillales</taxon>
        <taxon>Bacillales Family XII. Incertae Sedis</taxon>
        <taxon>Exiguobacterium</taxon>
    </lineage>
</organism>
<comment type="function">
    <text evidence="1">Converts 2C-methyl-D-erythritol 2,4-cyclodiphosphate (ME-2,4cPP) into 1-hydroxy-2-methyl-2-(E)-butenyl 4-diphosphate.</text>
</comment>
<comment type="catalytic activity">
    <reaction evidence="1">
        <text>(2E)-4-hydroxy-3-methylbut-2-enyl diphosphate + oxidized [flavodoxin] + H2O + 2 H(+) = 2-C-methyl-D-erythritol 2,4-cyclic diphosphate + reduced [flavodoxin]</text>
        <dbReference type="Rhea" id="RHEA:43604"/>
        <dbReference type="Rhea" id="RHEA-COMP:10622"/>
        <dbReference type="Rhea" id="RHEA-COMP:10623"/>
        <dbReference type="ChEBI" id="CHEBI:15377"/>
        <dbReference type="ChEBI" id="CHEBI:15378"/>
        <dbReference type="ChEBI" id="CHEBI:57618"/>
        <dbReference type="ChEBI" id="CHEBI:58210"/>
        <dbReference type="ChEBI" id="CHEBI:58483"/>
        <dbReference type="ChEBI" id="CHEBI:128753"/>
        <dbReference type="EC" id="1.17.7.3"/>
    </reaction>
</comment>
<comment type="cofactor">
    <cofactor evidence="1">
        <name>[4Fe-4S] cluster</name>
        <dbReference type="ChEBI" id="CHEBI:49883"/>
    </cofactor>
    <text evidence="1">Binds 1 [4Fe-4S] cluster.</text>
</comment>
<comment type="pathway">
    <text evidence="1">Isoprenoid biosynthesis; isopentenyl diphosphate biosynthesis via DXP pathway; isopentenyl diphosphate from 1-deoxy-D-xylulose 5-phosphate: step 5/6.</text>
</comment>
<comment type="similarity">
    <text evidence="1">Belongs to the IspG family.</text>
</comment>
<dbReference type="EC" id="1.17.7.3" evidence="1"/>
<dbReference type="EMBL" id="CP001022">
    <property type="protein sequence ID" value="ACB60334.1"/>
    <property type="molecule type" value="Genomic_DNA"/>
</dbReference>
<dbReference type="RefSeq" id="WP_012369758.1">
    <property type="nucleotide sequence ID" value="NC_010556.1"/>
</dbReference>
<dbReference type="SMR" id="B1YLA2"/>
<dbReference type="STRING" id="262543.Exig_0854"/>
<dbReference type="KEGG" id="esi:Exig_0854"/>
<dbReference type="eggNOG" id="COG0821">
    <property type="taxonomic scope" value="Bacteria"/>
</dbReference>
<dbReference type="HOGENOM" id="CLU_042258_0_0_9"/>
<dbReference type="OrthoDB" id="9803214at2"/>
<dbReference type="UniPathway" id="UPA00056">
    <property type="reaction ID" value="UER00096"/>
</dbReference>
<dbReference type="Proteomes" id="UP000001681">
    <property type="component" value="Chromosome"/>
</dbReference>
<dbReference type="GO" id="GO:0051539">
    <property type="term" value="F:4 iron, 4 sulfur cluster binding"/>
    <property type="evidence" value="ECO:0007669"/>
    <property type="project" value="UniProtKB-UniRule"/>
</dbReference>
<dbReference type="GO" id="GO:0046429">
    <property type="term" value="F:4-hydroxy-3-methylbut-2-en-1-yl diphosphate synthase activity (ferredoxin)"/>
    <property type="evidence" value="ECO:0007669"/>
    <property type="project" value="UniProtKB-UniRule"/>
</dbReference>
<dbReference type="GO" id="GO:0141197">
    <property type="term" value="F:4-hydroxy-3-methylbut-2-enyl-diphosphate synthase activity (flavodoxin)"/>
    <property type="evidence" value="ECO:0007669"/>
    <property type="project" value="UniProtKB-EC"/>
</dbReference>
<dbReference type="GO" id="GO:0005506">
    <property type="term" value="F:iron ion binding"/>
    <property type="evidence" value="ECO:0007669"/>
    <property type="project" value="InterPro"/>
</dbReference>
<dbReference type="GO" id="GO:0019288">
    <property type="term" value="P:isopentenyl diphosphate biosynthetic process, methylerythritol 4-phosphate pathway"/>
    <property type="evidence" value="ECO:0007669"/>
    <property type="project" value="UniProtKB-UniRule"/>
</dbReference>
<dbReference type="GO" id="GO:0016114">
    <property type="term" value="P:terpenoid biosynthetic process"/>
    <property type="evidence" value="ECO:0007669"/>
    <property type="project" value="InterPro"/>
</dbReference>
<dbReference type="FunFam" id="3.20.20.20:FF:000001">
    <property type="entry name" value="4-hydroxy-3-methylbut-2-en-1-yl diphosphate synthase (flavodoxin)"/>
    <property type="match status" value="1"/>
</dbReference>
<dbReference type="FunFam" id="3.30.413.10:FF:000005">
    <property type="entry name" value="4-hydroxy-3-methylbut-2-en-1-yl diphosphate synthase (flavodoxin)"/>
    <property type="match status" value="1"/>
</dbReference>
<dbReference type="Gene3D" id="3.20.20.20">
    <property type="entry name" value="Dihydropteroate synthase-like"/>
    <property type="match status" value="1"/>
</dbReference>
<dbReference type="Gene3D" id="3.30.413.10">
    <property type="entry name" value="Sulfite Reductase Hemoprotein, domain 1"/>
    <property type="match status" value="1"/>
</dbReference>
<dbReference type="HAMAP" id="MF_00159">
    <property type="entry name" value="IspG"/>
    <property type="match status" value="1"/>
</dbReference>
<dbReference type="InterPro" id="IPR011005">
    <property type="entry name" value="Dihydropteroate_synth-like_sf"/>
</dbReference>
<dbReference type="InterPro" id="IPR016425">
    <property type="entry name" value="IspG_bac"/>
</dbReference>
<dbReference type="InterPro" id="IPR004588">
    <property type="entry name" value="IspG_bac-typ"/>
</dbReference>
<dbReference type="InterPro" id="IPR045854">
    <property type="entry name" value="NO2/SO3_Rdtase_4Fe4S_sf"/>
</dbReference>
<dbReference type="NCBIfam" id="TIGR00612">
    <property type="entry name" value="ispG_gcpE"/>
    <property type="match status" value="1"/>
</dbReference>
<dbReference type="NCBIfam" id="NF001540">
    <property type="entry name" value="PRK00366.1"/>
    <property type="match status" value="1"/>
</dbReference>
<dbReference type="PANTHER" id="PTHR30454">
    <property type="entry name" value="4-HYDROXY-3-METHYLBUT-2-EN-1-YL DIPHOSPHATE SYNTHASE"/>
    <property type="match status" value="1"/>
</dbReference>
<dbReference type="PANTHER" id="PTHR30454:SF0">
    <property type="entry name" value="4-HYDROXY-3-METHYLBUT-2-EN-1-YL DIPHOSPHATE SYNTHASE (FERREDOXIN), CHLOROPLASTIC"/>
    <property type="match status" value="1"/>
</dbReference>
<dbReference type="Pfam" id="PF04551">
    <property type="entry name" value="GcpE"/>
    <property type="match status" value="1"/>
</dbReference>
<dbReference type="PIRSF" id="PIRSF004640">
    <property type="entry name" value="IspG"/>
    <property type="match status" value="1"/>
</dbReference>
<dbReference type="SUPFAM" id="SSF51717">
    <property type="entry name" value="Dihydropteroate synthetase-like"/>
    <property type="match status" value="1"/>
</dbReference>
<dbReference type="SUPFAM" id="SSF56014">
    <property type="entry name" value="Nitrite and sulphite reductase 4Fe-4S domain-like"/>
    <property type="match status" value="1"/>
</dbReference>
<feature type="chain" id="PRO_1000097161" description="4-hydroxy-3-methylbut-2-en-1-yl diphosphate synthase (flavodoxin)">
    <location>
        <begin position="1"/>
        <end position="369"/>
    </location>
</feature>
<feature type="binding site" evidence="1">
    <location>
        <position position="268"/>
    </location>
    <ligand>
        <name>[4Fe-4S] cluster</name>
        <dbReference type="ChEBI" id="CHEBI:49883"/>
    </ligand>
</feature>
<feature type="binding site" evidence="1">
    <location>
        <position position="271"/>
    </location>
    <ligand>
        <name>[4Fe-4S] cluster</name>
        <dbReference type="ChEBI" id="CHEBI:49883"/>
    </ligand>
</feature>
<feature type="binding site" evidence="1">
    <location>
        <position position="303"/>
    </location>
    <ligand>
        <name>[4Fe-4S] cluster</name>
        <dbReference type="ChEBI" id="CHEBI:49883"/>
    </ligand>
</feature>
<feature type="binding site" evidence="1">
    <location>
        <position position="310"/>
    </location>
    <ligand>
        <name>[4Fe-4S] cluster</name>
        <dbReference type="ChEBI" id="CHEBI:49883"/>
    </ligand>
</feature>
<reference key="1">
    <citation type="submission" date="2008-04" db="EMBL/GenBank/DDBJ databases">
        <title>Complete sequence of chromosome of Exiguobacterium sibiricum 255-15.</title>
        <authorList>
            <consortium name="US DOE Joint Genome Institute"/>
            <person name="Copeland A."/>
            <person name="Lucas S."/>
            <person name="Lapidus A."/>
            <person name="Glavina del Rio T."/>
            <person name="Dalin E."/>
            <person name="Tice H."/>
            <person name="Bruce D."/>
            <person name="Goodwin L."/>
            <person name="Pitluck S."/>
            <person name="Kiss H."/>
            <person name="Chertkov O."/>
            <person name="Monk C."/>
            <person name="Brettin T."/>
            <person name="Detter J.C."/>
            <person name="Han C."/>
            <person name="Kuske C.R."/>
            <person name="Schmutz J."/>
            <person name="Larimer F."/>
            <person name="Land M."/>
            <person name="Hauser L."/>
            <person name="Kyrpides N."/>
            <person name="Mikhailova N."/>
            <person name="Vishnivetskaya T."/>
            <person name="Rodrigues D.F."/>
            <person name="Gilichinsky D."/>
            <person name="Tiedje J."/>
            <person name="Richardson P."/>
        </authorList>
    </citation>
    <scope>NUCLEOTIDE SEQUENCE [LARGE SCALE GENOMIC DNA]</scope>
    <source>
        <strain>DSM 17290 / CCUG 55495 / CIP 109462 / JCM 13490 / 255-15</strain>
    </source>
</reference>
<accession>B1YLA2</accession>
<keyword id="KW-0004">4Fe-4S</keyword>
<keyword id="KW-0408">Iron</keyword>
<keyword id="KW-0411">Iron-sulfur</keyword>
<keyword id="KW-0414">Isoprene biosynthesis</keyword>
<keyword id="KW-0479">Metal-binding</keyword>
<keyword id="KW-0560">Oxidoreductase</keyword>
<keyword id="KW-1185">Reference proteome</keyword>
<gene>
    <name evidence="1" type="primary">ispG</name>
    <name type="ordered locus">Exig_0854</name>
</gene>
<name>ISPG_EXIS2</name>
<proteinExistence type="inferred from homology"/>
<evidence type="ECO:0000255" key="1">
    <source>
        <dbReference type="HAMAP-Rule" id="MF_00159"/>
    </source>
</evidence>
<sequence length="369" mass="39719">MPKMVHRSKTRPVRVGDLVIGGNNEVIIQSMTTTKTHDVEATVAEILRLEEAGCQIVRVACPEERDALALAEIKSRINIPLVVDIHFNYKLALMAIEAGVDKIRINPGNIGRREKVEAVVTAAKAKNIPIRIGVNAGSLEKHILEKYGYPTARGMVESALHHIKILEDLDFHDIIVSLKASDVQLALEAYQLASESFDYPLHVGITESGPLRTGSLKSAAGLGAILSRGIGNTVRVSLSADPVEEVKVAKEVLKSFGLAANAATLISCPTCGRIEIDLMAIAAEIEDYIDKIQVNIKVAVLGCAVNGPGEAREADIGIAGARNEGLLFRHGEIIRKVPEATMVEELKKEIDAIVLEKEAEKEAAKASQA</sequence>